<organism>
    <name type="scientific">Saccharomyces cerevisiae (strain ATCC 204508 / S288c)</name>
    <name type="common">Baker's yeast</name>
    <dbReference type="NCBI Taxonomy" id="559292"/>
    <lineage>
        <taxon>Eukaryota</taxon>
        <taxon>Fungi</taxon>
        <taxon>Dikarya</taxon>
        <taxon>Ascomycota</taxon>
        <taxon>Saccharomycotina</taxon>
        <taxon>Saccharomycetes</taxon>
        <taxon>Saccharomycetales</taxon>
        <taxon>Saccharomycetaceae</taxon>
        <taxon>Saccharomyces</taxon>
    </lineage>
</organism>
<name>WSS1_YEAST</name>
<evidence type="ECO:0000250" key="1">
    <source>
        <dbReference type="UniProtKB" id="Q9H040"/>
    </source>
</evidence>
<evidence type="ECO:0000255" key="2">
    <source>
        <dbReference type="PROSITE-ProRule" id="PRU00730"/>
    </source>
</evidence>
<evidence type="ECO:0000255" key="3">
    <source>
        <dbReference type="PROSITE-ProRule" id="PRU10095"/>
    </source>
</evidence>
<evidence type="ECO:0000256" key="4">
    <source>
        <dbReference type="SAM" id="MobiDB-lite"/>
    </source>
</evidence>
<evidence type="ECO:0000269" key="5">
    <source>
    </source>
</evidence>
<evidence type="ECO:0000269" key="6">
    <source>
    </source>
</evidence>
<evidence type="ECO:0000269" key="7">
    <source>
    </source>
</evidence>
<evidence type="ECO:0000269" key="8">
    <source>
    </source>
</evidence>
<evidence type="ECO:0000269" key="9">
    <source>
    </source>
</evidence>
<evidence type="ECO:0000269" key="10">
    <source>
    </source>
</evidence>
<evidence type="ECO:0000269" key="11">
    <source>
    </source>
</evidence>
<evidence type="ECO:0000305" key="12"/>
<evidence type="ECO:0000305" key="13">
    <source>
    </source>
</evidence>
<evidence type="ECO:0000305" key="14">
    <source>
    </source>
</evidence>
<dbReference type="EC" id="3.4.24.-" evidence="11"/>
<dbReference type="EMBL" id="U10398">
    <property type="protein sequence ID" value="AAB68404.1"/>
    <property type="molecule type" value="Genomic_DNA"/>
</dbReference>
<dbReference type="EMBL" id="BK006934">
    <property type="protein sequence ID" value="DAA06827.1"/>
    <property type="molecule type" value="Genomic_DNA"/>
</dbReference>
<dbReference type="PIR" id="S48978">
    <property type="entry name" value="S48978"/>
</dbReference>
<dbReference type="RefSeq" id="NP_012002.1">
    <property type="nucleotide sequence ID" value="NM_001179264.1"/>
</dbReference>
<dbReference type="SMR" id="P38838"/>
<dbReference type="BioGRID" id="36567">
    <property type="interactions" value="227"/>
</dbReference>
<dbReference type="DIP" id="DIP-1600N"/>
<dbReference type="FunCoup" id="P38838">
    <property type="interactions" value="107"/>
</dbReference>
<dbReference type="IntAct" id="P38838">
    <property type="interactions" value="4"/>
</dbReference>
<dbReference type="MINT" id="P38838"/>
<dbReference type="STRING" id="4932.YHR134W"/>
<dbReference type="MEROPS" id="M80.001"/>
<dbReference type="iPTMnet" id="P38838"/>
<dbReference type="PaxDb" id="4932-YHR134W"/>
<dbReference type="PeptideAtlas" id="P38838"/>
<dbReference type="TopDownProteomics" id="P38838"/>
<dbReference type="EnsemblFungi" id="YHR134W_mRNA">
    <property type="protein sequence ID" value="YHR134W"/>
    <property type="gene ID" value="YHR134W"/>
</dbReference>
<dbReference type="GeneID" id="856536"/>
<dbReference type="KEGG" id="sce:YHR134W"/>
<dbReference type="AGR" id="SGD:S000001176"/>
<dbReference type="SGD" id="S000001176">
    <property type="gene designation" value="WSS1"/>
</dbReference>
<dbReference type="VEuPathDB" id="FungiDB:YHR134W"/>
<dbReference type="eggNOG" id="KOG4842">
    <property type="taxonomic scope" value="Eukaryota"/>
</dbReference>
<dbReference type="HOGENOM" id="CLU_023057_3_0_1"/>
<dbReference type="InParanoid" id="P38838"/>
<dbReference type="OMA" id="KFKVWSC"/>
<dbReference type="OrthoDB" id="49605at2759"/>
<dbReference type="BioCyc" id="YEAST:G3O-31172-MONOMER"/>
<dbReference type="BioGRID-ORCS" id="856536">
    <property type="hits" value="1 hit in 10 CRISPR screens"/>
</dbReference>
<dbReference type="PRO" id="PR:P38838"/>
<dbReference type="Proteomes" id="UP000002311">
    <property type="component" value="Chromosome VIII"/>
</dbReference>
<dbReference type="RNAct" id="P38838">
    <property type="molecule type" value="protein"/>
</dbReference>
<dbReference type="GO" id="GO:0000324">
    <property type="term" value="C:fungal-type vacuole"/>
    <property type="evidence" value="ECO:0000314"/>
    <property type="project" value="SGD"/>
</dbReference>
<dbReference type="GO" id="GO:0005635">
    <property type="term" value="C:nuclear envelope"/>
    <property type="evidence" value="ECO:0000314"/>
    <property type="project" value="SGD"/>
</dbReference>
<dbReference type="GO" id="GO:0005634">
    <property type="term" value="C:nucleus"/>
    <property type="evidence" value="ECO:0000318"/>
    <property type="project" value="GO_Central"/>
</dbReference>
<dbReference type="GO" id="GO:0046872">
    <property type="term" value="F:metal ion binding"/>
    <property type="evidence" value="ECO:0007669"/>
    <property type="project" value="UniProtKB-KW"/>
</dbReference>
<dbReference type="GO" id="GO:0004222">
    <property type="term" value="F:metalloendopeptidase activity"/>
    <property type="evidence" value="ECO:0000314"/>
    <property type="project" value="SGD"/>
</dbReference>
<dbReference type="GO" id="GO:0008237">
    <property type="term" value="F:metallopeptidase activity"/>
    <property type="evidence" value="ECO:0000314"/>
    <property type="project" value="SGD"/>
</dbReference>
<dbReference type="GO" id="GO:0032183">
    <property type="term" value="F:SUMO binding"/>
    <property type="evidence" value="ECO:0000314"/>
    <property type="project" value="SGD"/>
</dbReference>
<dbReference type="GO" id="GO:0061665">
    <property type="term" value="F:SUMO ligase activity"/>
    <property type="evidence" value="ECO:0000314"/>
    <property type="project" value="SGD"/>
</dbReference>
<dbReference type="GO" id="GO:0006281">
    <property type="term" value="P:DNA repair"/>
    <property type="evidence" value="ECO:0000318"/>
    <property type="project" value="GO_Central"/>
</dbReference>
<dbReference type="GO" id="GO:0036205">
    <property type="term" value="P:histone catabolic process"/>
    <property type="evidence" value="ECO:0000315"/>
    <property type="project" value="SGD"/>
</dbReference>
<dbReference type="GO" id="GO:0016925">
    <property type="term" value="P:protein sumoylation"/>
    <property type="evidence" value="ECO:0000314"/>
    <property type="project" value="SGD"/>
</dbReference>
<dbReference type="GO" id="GO:0106300">
    <property type="term" value="P:protein-DNA covalent cross-linking repair"/>
    <property type="evidence" value="ECO:0000314"/>
    <property type="project" value="UniProtKB"/>
</dbReference>
<dbReference type="GO" id="GO:0006508">
    <property type="term" value="P:proteolysis"/>
    <property type="evidence" value="ECO:0007669"/>
    <property type="project" value="UniProtKB-KW"/>
</dbReference>
<dbReference type="GO" id="GO:1990414">
    <property type="term" value="P:replication-born double-strand break repair via sister chromatid exchange"/>
    <property type="evidence" value="ECO:0000315"/>
    <property type="project" value="SGD"/>
</dbReference>
<dbReference type="GO" id="GO:0019985">
    <property type="term" value="P:translesion synthesis"/>
    <property type="evidence" value="ECO:0000314"/>
    <property type="project" value="SGD"/>
</dbReference>
<dbReference type="InterPro" id="IPR013536">
    <property type="entry name" value="WLM_dom"/>
</dbReference>
<dbReference type="InterPro" id="IPR053000">
    <property type="entry name" value="WSS1-like_metalloprotease"/>
</dbReference>
<dbReference type="PANTHER" id="PTHR46622">
    <property type="entry name" value="DNA-DEPENDENT METALLOPROTEASE WSS1"/>
    <property type="match status" value="1"/>
</dbReference>
<dbReference type="PANTHER" id="PTHR46622:SF1">
    <property type="entry name" value="DNA-DEPENDENT METALLOPROTEASE WSS1"/>
    <property type="match status" value="1"/>
</dbReference>
<dbReference type="Pfam" id="PF08325">
    <property type="entry name" value="WLM"/>
    <property type="match status" value="1"/>
</dbReference>
<dbReference type="PROSITE" id="PS51397">
    <property type="entry name" value="WLM"/>
    <property type="match status" value="1"/>
</dbReference>
<dbReference type="PROSITE" id="PS00142">
    <property type="entry name" value="ZINC_PROTEASE"/>
    <property type="match status" value="1"/>
</dbReference>
<accession>P38838</accession>
<accession>D3DL83</accession>
<comment type="function">
    <text evidence="5 6 7 8 10 11">Metalloendopeptidase that acts selectively on DNA-binding proteins. DNA is needed to bring the protease and substrates together to enable proteolysis. Involved in the repair of toxic DNA-protein cross-links (DPCs) such as covalently trapped topoisomerase 1 (TOP1) adducts on DNA lesions or DPCs induced by reactive compounds such as formaldehyde. Involved in DNA damage response and processing of stalled or collapsed replication forks by removing the covalently trapped TOP1 from chromatin. DPC proteolysis enables the repair of the lesions via downstream DNA repair pathways. May be recruited to DPCs via the SUMOylation of substrate proteins at damaged DNA sites.</text>
</comment>
<comment type="cofactor">
    <cofactor evidence="1">
        <name>Zn(2+)</name>
        <dbReference type="ChEBI" id="CHEBI:29105"/>
    </cofactor>
</comment>
<comment type="activity regulation">
    <text evidence="11">Inactivated by EDTA.</text>
</comment>
<comment type="subunit">
    <text evidence="7 10 11">Binds to DNA. Interacts with CDC48 and SMT3. Interacts with PSY2 and TOF1.</text>
</comment>
<comment type="subcellular location">
    <subcellularLocation>
        <location evidence="9">Nucleus</location>
    </subcellularLocation>
    <text>Present in a single sharp spot near the nuclear membrane, distinct from the spindle pole bodies and nucleolus. In dividing cells, the spot is exclusively present in the mother cell.</text>
</comment>
<comment type="domain">
    <text evidence="11">The SHP box and the VCP-interaction motif (VIM) are important both together for binding to CDC48. The 2 SUMO interaction motifs (SIM) are each important for binding to SMT3(SUMO).</text>
</comment>
<comment type="disruption phenotype">
    <text evidence="11">Accumulates DPCs and exhibits gross chromosomal rearrangements.</text>
</comment>
<comment type="similarity">
    <text evidence="12">Belongs to the peptidase M3 family. WSS1-like metalloprotease (WLM) subfamily.</text>
</comment>
<comment type="caution">
    <text evidence="13 14">Was initially reported to be a SUMO-dependent isopeptidase (PubMed:20516210), but this activity could not be confirmed (PubMed:24998930).</text>
</comment>
<keyword id="KW-0227">DNA damage</keyword>
<keyword id="KW-0378">Hydrolase</keyword>
<keyword id="KW-0479">Metal-binding</keyword>
<keyword id="KW-0482">Metalloprotease</keyword>
<keyword id="KW-0539">Nucleus</keyword>
<keyword id="KW-0645">Protease</keyword>
<keyword id="KW-1185">Reference proteome</keyword>
<keyword id="KW-0862">Zinc</keyword>
<proteinExistence type="evidence at protein level"/>
<feature type="chain" id="PRO_0000202919" description="DNA-dependent metalloprotease WSS1">
    <location>
        <begin position="1"/>
        <end position="269"/>
    </location>
</feature>
<feature type="domain" description="WLM" evidence="2">
    <location>
        <begin position="20"/>
        <end position="221"/>
    </location>
</feature>
<feature type="region of interest" description="Disordered" evidence="4">
    <location>
        <begin position="1"/>
        <end position="22"/>
    </location>
</feature>
<feature type="region of interest" description="Required and sufficient for binding to DNA">
    <location>
        <begin position="161"/>
        <end position="208"/>
    </location>
</feature>
<feature type="short sequence motif" description="SHP box">
    <location>
        <begin position="152"/>
        <end position="160"/>
    </location>
</feature>
<feature type="short sequence motif" description="VCP-interaction motif (VIM)" evidence="11">
    <location>
        <begin position="209"/>
        <end position="219"/>
    </location>
</feature>
<feature type="short sequence motif" description="SUMO interaction motif 1 (SIM)" evidence="11">
    <location>
        <begin position="247"/>
        <end position="254"/>
    </location>
</feature>
<feature type="short sequence motif" description="SUMO interaction motif 2 (SIM)" evidence="11">
    <location>
        <begin position="266"/>
        <end position="269"/>
    </location>
</feature>
<feature type="active site" evidence="3">
    <location>
        <position position="116"/>
    </location>
</feature>
<feature type="binding site" evidence="3">
    <location>
        <position position="115"/>
    </location>
    <ligand>
        <name>Zn(2+)</name>
        <dbReference type="ChEBI" id="CHEBI:29105"/>
        <note>catalytic</note>
    </ligand>
</feature>
<feature type="binding site" evidence="3">
    <location>
        <position position="119"/>
    </location>
    <ligand>
        <name>Zn(2+)</name>
        <dbReference type="ChEBI" id="CHEBI:29105"/>
        <note>catalytic</note>
    </ligand>
</feature>
<feature type="binding site" evidence="3">
    <location>
        <position position="125"/>
    </location>
    <ligand>
        <name>Zn(2+)</name>
        <dbReference type="ChEBI" id="CHEBI:29105"/>
        <note>catalytic</note>
    </ligand>
</feature>
<feature type="mutagenesis site" description="In wss1-pd; loss of function; when associated with A-119." evidence="10">
    <original>H</original>
    <variation>A</variation>
    <location>
        <position position="115"/>
    </location>
</feature>
<feature type="mutagenesis site" description="Loss of function." evidence="11">
    <original>E</original>
    <variation>Q</variation>
    <location>
        <position position="116"/>
    </location>
</feature>
<feature type="mutagenesis site" description="In wss1-pd; loss of function; when associated with A-115." evidence="10">
    <original>H</original>
    <variation>A</variation>
    <location>
        <position position="119"/>
    </location>
</feature>
<protein>
    <recommendedName>
        <fullName>DNA-dependent metalloprotease WSS1</fullName>
        <ecNumber evidence="11">3.4.24.-</ecNumber>
    </recommendedName>
    <alternativeName>
        <fullName>DNA damage response protein WSS1</fullName>
    </alternativeName>
    <alternativeName>
        <fullName>SUMO-dependent isopeptidase WSS1</fullName>
    </alternativeName>
    <alternativeName>
        <fullName>Weak suppressor of SMT3 protein 1</fullName>
    </alternativeName>
</protein>
<sequence>MKTEGIKSPSAKYHDMAGSQRIPHKNPHIQKVAVLQSKPNKEDALNLIKEIAHKVSYLMKENHFKVTNLVEFYPRDQRLLGMNVNHGSKIMLRLRCSTDEFQFLPMECIMGTMLHELTHNLFGPHDKKFYNKLDELIGRQWVIEQRGLYDTFLGNGQRLGGRANLRSNRYPMTGISTNTGIVRKRGKGVKLGSLHPEGISSIDRGNSPRELAAFAAERRYRDDRWCGETKNNKDQIISDNISSSLEVVILDDDDEVLPGDTLIEVIDLT</sequence>
<reference key="1">
    <citation type="journal article" date="1994" name="Science">
        <title>Complete nucleotide sequence of Saccharomyces cerevisiae chromosome VIII.</title>
        <authorList>
            <person name="Johnston M."/>
            <person name="Andrews S."/>
            <person name="Brinkman R."/>
            <person name="Cooper J."/>
            <person name="Ding H."/>
            <person name="Dover J."/>
            <person name="Du Z."/>
            <person name="Favello A."/>
            <person name="Fulton L."/>
            <person name="Gattung S."/>
            <person name="Geisel C."/>
            <person name="Kirsten J."/>
            <person name="Kucaba T."/>
            <person name="Hillier L.W."/>
            <person name="Jier M."/>
            <person name="Johnston L."/>
            <person name="Langston Y."/>
            <person name="Latreille P."/>
            <person name="Louis E.J."/>
            <person name="Macri C."/>
            <person name="Mardis E."/>
            <person name="Menezes S."/>
            <person name="Mouser L."/>
            <person name="Nhan M."/>
            <person name="Rifkin L."/>
            <person name="Riles L."/>
            <person name="St Peter H."/>
            <person name="Trevaskis E."/>
            <person name="Vaughan K."/>
            <person name="Vignati D."/>
            <person name="Wilcox L."/>
            <person name="Wohldman P."/>
            <person name="Waterston R."/>
            <person name="Wilson R."/>
            <person name="Vaudin M."/>
        </authorList>
    </citation>
    <scope>NUCLEOTIDE SEQUENCE [LARGE SCALE GENOMIC DNA]</scope>
    <source>
        <strain>ATCC 204508 / S288c</strain>
    </source>
</reference>
<reference key="2">
    <citation type="journal article" date="2014" name="G3 (Bethesda)">
        <title>The reference genome sequence of Saccharomyces cerevisiae: Then and now.</title>
        <authorList>
            <person name="Engel S.R."/>
            <person name="Dietrich F.S."/>
            <person name="Fisk D.G."/>
            <person name="Binkley G."/>
            <person name="Balakrishnan R."/>
            <person name="Costanzo M.C."/>
            <person name="Dwight S.S."/>
            <person name="Hitz B.C."/>
            <person name="Karra K."/>
            <person name="Nash R.S."/>
            <person name="Weng S."/>
            <person name="Wong E.D."/>
            <person name="Lloyd P."/>
            <person name="Skrzypek M.S."/>
            <person name="Miyasato S.R."/>
            <person name="Simison M."/>
            <person name="Cherry J.M."/>
        </authorList>
    </citation>
    <scope>GENOME REANNOTATION</scope>
    <source>
        <strain>ATCC 204508 / S288c</strain>
    </source>
</reference>
<reference key="3">
    <citation type="journal article" date="2001" name="Genetics">
        <title>Genes involved in sister chromatid separation and segregation in the budding yeast Saccharomyces cerevisiae.</title>
        <authorList>
            <person name="Biggins S."/>
            <person name="Bhalla N."/>
            <person name="Chang A."/>
            <person name="Smith D.L."/>
            <person name="Murray A.W."/>
        </authorList>
    </citation>
    <scope>FUNCTION</scope>
</reference>
<reference key="4">
    <citation type="journal article" date="2001" name="Proc. Natl. Acad. Sci. U.S.A.">
        <title>A genome-wide screen in Saccharomyces cerevisiae for genes affecting UV radiation sensitivity.</title>
        <authorList>
            <person name="Birrell G.W."/>
            <person name="Giaever G."/>
            <person name="Chu A.M."/>
            <person name="Davis R.W."/>
            <person name="Brown J.M."/>
        </authorList>
    </citation>
    <scope>FUNCTION</scope>
</reference>
<reference key="5">
    <citation type="journal article" date="2004" name="Nucleic Acids Res.">
        <title>Coordinated functions of WSS1, PSY2 and TOF1 in the DNA damage response.</title>
        <authorList>
            <person name="O'Neill B.M."/>
            <person name="Hanway D."/>
            <person name="Winzeler E.A."/>
            <person name="Romesberg F.E."/>
        </authorList>
    </citation>
    <scope>FUNCTION</scope>
    <scope>INTERACTION WITH PSY2 AND TOF1</scope>
</reference>
<reference key="6">
    <citation type="journal article" date="2007" name="PLoS Genet.">
        <title>Genome-wide analysis of Rad52 foci reveals diverse mechanisms impacting recombination.</title>
        <authorList>
            <person name="Alvaro D."/>
            <person name="Lisby M."/>
            <person name="Rothstein R."/>
        </authorList>
    </citation>
    <scope>FUNCTION</scope>
</reference>
<reference key="7">
    <citation type="journal article" date="2008" name="FEMS Microbiol. Lett.">
        <title>The Saccharomyces cerevisiae Wss1 protein is only present in mother cells.</title>
        <authorList>
            <person name="van Heusden G.P.H."/>
            <person name="Steensma H.Y."/>
        </authorList>
    </citation>
    <scope>SUBCELLULAR LOCATION</scope>
</reference>
<reference key="8">
    <citation type="journal article" date="2010" name="Mol. Cell. Biol.">
        <title>Wss1 is a SUMO-dependent isopeptidase that interacts genetically with the Slx5-Slx8 SUMO-targeted ubiquitin ligase.</title>
        <authorList>
            <person name="Mullen J.R."/>
            <person name="Chen C.F."/>
            <person name="Brill S.J."/>
        </authorList>
    </citation>
    <scope>FUNCTION</scope>
    <scope>MUTAGENESIS OF HIS-115 AND HIS-119</scope>
    <scope>INTERACTION WITH SMT3</scope>
</reference>
<reference key="9">
    <citation type="journal article" date="2014" name="Cell">
        <title>A DNA-dependent protease involved in DNA-protein crosslink repair.</title>
        <authorList>
            <person name="Stingele J."/>
            <person name="Schwarz M.S."/>
            <person name="Bloemeke N."/>
            <person name="Wolf P.G."/>
            <person name="Jentsch S."/>
        </authorList>
    </citation>
    <scope>FUNCTION</scope>
    <scope>ACTIVITY REGULATION</scope>
    <scope>MUTAGENESIS OF GLU-116</scope>
    <scope>INTERACTION WITH CDC48 AND SMT3</scope>
    <scope>DNA-BINDING</scope>
    <scope>DOMAIN</scope>
    <scope>DISRUPTION PHENOTYPE</scope>
</reference>
<gene>
    <name type="primary">WSS1</name>
    <name type="ordered locus">YHR134W</name>
</gene>